<organism>
    <name type="scientific">Pyropia yezoensis</name>
    <name type="common">Susabi-nori</name>
    <name type="synonym">Porphyra yezoensis</name>
    <dbReference type="NCBI Taxonomy" id="2788"/>
    <lineage>
        <taxon>Eukaryota</taxon>
        <taxon>Rhodophyta</taxon>
        <taxon>Bangiophyceae</taxon>
        <taxon>Bangiales</taxon>
        <taxon>Bangiaceae</taxon>
        <taxon>Pyropia</taxon>
    </lineage>
</organism>
<geneLocation type="chloroplast"/>
<gene>
    <name type="primary">ycf16</name>
</gene>
<reference key="1">
    <citation type="submission" date="2003-11" db="EMBL/GenBank/DDBJ databases">
        <title>Whole genome sequence of Porphyra yezoensis chloroplast.</title>
        <authorList>
            <person name="Kunimoto M."/>
            <person name="Morishima K."/>
            <person name="Yoshikawa M."/>
            <person name="Fukuda S."/>
            <person name="Kobayashi T."/>
            <person name="Kobayashi M."/>
            <person name="Okazaki T."/>
            <person name="Ohara I."/>
            <person name="Nakayama I."/>
        </authorList>
    </citation>
    <scope>NUCLEOTIDE SEQUENCE [LARGE SCALE GENOMIC DNA]</scope>
    <source>
        <strain>U-51</strain>
    </source>
</reference>
<accession>Q1XDP6</accession>
<comment type="subcellular location">
    <subcellularLocation>
        <location>Plastid</location>
        <location>Chloroplast</location>
    </subcellularLocation>
</comment>
<comment type="similarity">
    <text evidence="2">Belongs to the ABC transporter superfamily. Ycf16 family.</text>
</comment>
<name>ABCX_PYRYE</name>
<sequence length="251" mass="27634">MSQTILEIKDLYASVGETTILKGVNLSIRAGEIHAIMGPNGSGKSTLSKVIAGHPAYSLISGDILFFGQSILEIEPDERAKAGIFLAFQYPVEIPGVSNSDFLRIALNARRKFQGLSEFSPLEFFQLITEKIDLVGMQESFLTRNVNEGFSGGEKKRNEILQMALLDSKISILDETDSGLDIDALRVVAKGINTLAKSTNSIILITHYQRLLDYIIPDFVHIMSNGQIVKTGSVTLAQDLEKHGYDWITQT</sequence>
<feature type="chain" id="PRO_0000277458" description="Probable ATP-dependent transporter ycf16">
    <location>
        <begin position="1"/>
        <end position="251"/>
    </location>
</feature>
<feature type="domain" description="ABC transporter" evidence="1">
    <location>
        <begin position="6"/>
        <end position="250"/>
    </location>
</feature>
<feature type="binding site" evidence="1">
    <location>
        <begin position="38"/>
        <end position="45"/>
    </location>
    <ligand>
        <name>ATP</name>
        <dbReference type="ChEBI" id="CHEBI:30616"/>
    </ligand>
</feature>
<protein>
    <recommendedName>
        <fullName>Probable ATP-dependent transporter ycf16</fullName>
    </recommendedName>
</protein>
<dbReference type="EMBL" id="AP006715">
    <property type="protein sequence ID" value="BAE92365.1"/>
    <property type="molecule type" value="Genomic_DNA"/>
</dbReference>
<dbReference type="RefSeq" id="YP_536922.1">
    <property type="nucleotide sequence ID" value="NC_007932.1"/>
</dbReference>
<dbReference type="SMR" id="Q1XDP6"/>
<dbReference type="GeneID" id="3978969"/>
<dbReference type="GO" id="GO:0009507">
    <property type="term" value="C:chloroplast"/>
    <property type="evidence" value="ECO:0007669"/>
    <property type="project" value="UniProtKB-SubCell"/>
</dbReference>
<dbReference type="GO" id="GO:0005524">
    <property type="term" value="F:ATP binding"/>
    <property type="evidence" value="ECO:0007669"/>
    <property type="project" value="UniProtKB-KW"/>
</dbReference>
<dbReference type="GO" id="GO:0016887">
    <property type="term" value="F:ATP hydrolysis activity"/>
    <property type="evidence" value="ECO:0007669"/>
    <property type="project" value="InterPro"/>
</dbReference>
<dbReference type="CDD" id="cd03217">
    <property type="entry name" value="ABC_FeS_Assembly"/>
    <property type="match status" value="1"/>
</dbReference>
<dbReference type="Gene3D" id="3.40.50.300">
    <property type="entry name" value="P-loop containing nucleotide triphosphate hydrolases"/>
    <property type="match status" value="1"/>
</dbReference>
<dbReference type="InterPro" id="IPR003593">
    <property type="entry name" value="AAA+_ATPase"/>
</dbReference>
<dbReference type="InterPro" id="IPR003439">
    <property type="entry name" value="ABC_transporter-like_ATP-bd"/>
</dbReference>
<dbReference type="InterPro" id="IPR017871">
    <property type="entry name" value="ABC_transporter-like_CS"/>
</dbReference>
<dbReference type="InterPro" id="IPR010230">
    <property type="entry name" value="FeS-cluster_ATPase_SufC"/>
</dbReference>
<dbReference type="InterPro" id="IPR027417">
    <property type="entry name" value="P-loop_NTPase"/>
</dbReference>
<dbReference type="NCBIfam" id="TIGR01978">
    <property type="entry name" value="sufC"/>
    <property type="match status" value="1"/>
</dbReference>
<dbReference type="PANTHER" id="PTHR43204">
    <property type="entry name" value="ABC TRANSPORTER I FAMILY MEMBER 6, CHLOROPLASTIC"/>
    <property type="match status" value="1"/>
</dbReference>
<dbReference type="PANTHER" id="PTHR43204:SF1">
    <property type="entry name" value="ABC TRANSPORTER I FAMILY MEMBER 6, CHLOROPLASTIC"/>
    <property type="match status" value="1"/>
</dbReference>
<dbReference type="Pfam" id="PF00005">
    <property type="entry name" value="ABC_tran"/>
    <property type="match status" value="1"/>
</dbReference>
<dbReference type="SMART" id="SM00382">
    <property type="entry name" value="AAA"/>
    <property type="match status" value="1"/>
</dbReference>
<dbReference type="SUPFAM" id="SSF52540">
    <property type="entry name" value="P-loop containing nucleoside triphosphate hydrolases"/>
    <property type="match status" value="1"/>
</dbReference>
<dbReference type="PROSITE" id="PS00211">
    <property type="entry name" value="ABC_TRANSPORTER_1"/>
    <property type="match status" value="1"/>
</dbReference>
<dbReference type="PROSITE" id="PS50893">
    <property type="entry name" value="ABC_TRANSPORTER_2"/>
    <property type="match status" value="1"/>
</dbReference>
<proteinExistence type="inferred from homology"/>
<keyword id="KW-0067">ATP-binding</keyword>
<keyword id="KW-0150">Chloroplast</keyword>
<keyword id="KW-0547">Nucleotide-binding</keyword>
<keyword id="KW-0934">Plastid</keyword>
<keyword id="KW-0813">Transport</keyword>
<evidence type="ECO:0000255" key="1">
    <source>
        <dbReference type="PROSITE-ProRule" id="PRU00434"/>
    </source>
</evidence>
<evidence type="ECO:0000305" key="2"/>